<feature type="chain" id="PRO_0000327121" description="Protoheme IX farnesyltransferase">
    <location>
        <begin position="1"/>
        <end position="331"/>
    </location>
</feature>
<feature type="transmembrane region" description="Helical" evidence="1">
    <location>
        <begin position="63"/>
        <end position="83"/>
    </location>
</feature>
<feature type="transmembrane region" description="Helical" evidence="1">
    <location>
        <begin position="109"/>
        <end position="129"/>
    </location>
</feature>
<feature type="transmembrane region" description="Helical" evidence="1">
    <location>
        <begin position="132"/>
        <end position="152"/>
    </location>
</feature>
<feature type="transmembrane region" description="Helical" evidence="1">
    <location>
        <begin position="160"/>
        <end position="180"/>
    </location>
</feature>
<feature type="transmembrane region" description="Helical" evidence="1">
    <location>
        <begin position="188"/>
        <end position="208"/>
    </location>
</feature>
<feature type="transmembrane region" description="Helical" evidence="1">
    <location>
        <begin position="215"/>
        <end position="235"/>
    </location>
</feature>
<feature type="transmembrane region" description="Helical" evidence="1">
    <location>
        <begin position="241"/>
        <end position="261"/>
    </location>
</feature>
<feature type="transmembrane region" description="Helical" evidence="1">
    <location>
        <begin position="294"/>
        <end position="314"/>
    </location>
</feature>
<proteinExistence type="inferred from homology"/>
<keyword id="KW-0997">Cell inner membrane</keyword>
<keyword id="KW-1003">Cell membrane</keyword>
<keyword id="KW-0350">Heme biosynthesis</keyword>
<keyword id="KW-0472">Membrane</keyword>
<keyword id="KW-1185">Reference proteome</keyword>
<keyword id="KW-0808">Transferase</keyword>
<keyword id="KW-0812">Transmembrane</keyword>
<keyword id="KW-1133">Transmembrane helix</keyword>
<name>COXX_PROMT</name>
<comment type="function">
    <text evidence="1">Converts heme B (protoheme IX) to heme O by substitution of the vinyl group on carbon 2 of heme B porphyrin ring with a hydroxyethyl farnesyl side group.</text>
</comment>
<comment type="catalytic activity">
    <reaction evidence="1">
        <text>heme b + (2E,6E)-farnesyl diphosphate + H2O = Fe(II)-heme o + diphosphate</text>
        <dbReference type="Rhea" id="RHEA:28070"/>
        <dbReference type="ChEBI" id="CHEBI:15377"/>
        <dbReference type="ChEBI" id="CHEBI:33019"/>
        <dbReference type="ChEBI" id="CHEBI:60344"/>
        <dbReference type="ChEBI" id="CHEBI:60530"/>
        <dbReference type="ChEBI" id="CHEBI:175763"/>
        <dbReference type="EC" id="2.5.1.141"/>
    </reaction>
</comment>
<comment type="pathway">
    <text evidence="1">Porphyrin-containing compound metabolism; heme O biosynthesis; heme O from protoheme: step 1/1.</text>
</comment>
<comment type="subcellular location">
    <subcellularLocation>
        <location evidence="1">Cell inner membrane</location>
        <topology evidence="1">Multi-pass membrane protein</topology>
    </subcellularLocation>
</comment>
<comment type="miscellaneous">
    <text evidence="1">Carbon 2 of the heme B porphyrin ring is defined according to the Fischer nomenclature.</text>
</comment>
<comment type="similarity">
    <text evidence="1">Belongs to the UbiA prenyltransferase family. Protoheme IX farnesyltransferase subfamily.</text>
</comment>
<gene>
    <name evidence="1" type="primary">ctaB</name>
    <name type="ordered locus">PMN2A_1779</name>
</gene>
<accession>Q46GX1</accession>
<organism>
    <name type="scientific">Prochlorococcus marinus (strain NATL2A)</name>
    <dbReference type="NCBI Taxonomy" id="59920"/>
    <lineage>
        <taxon>Bacteria</taxon>
        <taxon>Bacillati</taxon>
        <taxon>Cyanobacteriota</taxon>
        <taxon>Cyanophyceae</taxon>
        <taxon>Synechococcales</taxon>
        <taxon>Prochlorococcaceae</taxon>
        <taxon>Prochlorococcus</taxon>
    </lineage>
</organism>
<evidence type="ECO:0000255" key="1">
    <source>
        <dbReference type="HAMAP-Rule" id="MF_00154"/>
    </source>
</evidence>
<protein>
    <recommendedName>
        <fullName evidence="1">Protoheme IX farnesyltransferase</fullName>
        <ecNumber evidence="1">2.5.1.141</ecNumber>
    </recommendedName>
    <alternativeName>
        <fullName evidence="1">Heme B farnesyltransferase</fullName>
    </alternativeName>
    <alternativeName>
        <fullName evidence="1">Heme O synthase</fullName>
    </alternativeName>
</protein>
<dbReference type="EC" id="2.5.1.141" evidence="1"/>
<dbReference type="EMBL" id="CP000095">
    <property type="protein sequence ID" value="AAZ59267.1"/>
    <property type="molecule type" value="Genomic_DNA"/>
</dbReference>
<dbReference type="RefSeq" id="WP_011294412.1">
    <property type="nucleotide sequence ID" value="NC_007335.2"/>
</dbReference>
<dbReference type="SMR" id="Q46GX1"/>
<dbReference type="STRING" id="59920.PMN2A_1779"/>
<dbReference type="KEGG" id="pmn:PMN2A_1779"/>
<dbReference type="HOGENOM" id="CLU_029631_0_2_3"/>
<dbReference type="OrthoDB" id="9814417at2"/>
<dbReference type="PhylomeDB" id="Q46GX1"/>
<dbReference type="UniPathway" id="UPA00834">
    <property type="reaction ID" value="UER00712"/>
</dbReference>
<dbReference type="Proteomes" id="UP000002535">
    <property type="component" value="Chromosome"/>
</dbReference>
<dbReference type="GO" id="GO:0005886">
    <property type="term" value="C:plasma membrane"/>
    <property type="evidence" value="ECO:0007669"/>
    <property type="project" value="UniProtKB-SubCell"/>
</dbReference>
<dbReference type="GO" id="GO:0008495">
    <property type="term" value="F:protoheme IX farnesyltransferase activity"/>
    <property type="evidence" value="ECO:0007669"/>
    <property type="project" value="UniProtKB-UniRule"/>
</dbReference>
<dbReference type="GO" id="GO:0048034">
    <property type="term" value="P:heme O biosynthetic process"/>
    <property type="evidence" value="ECO:0007669"/>
    <property type="project" value="UniProtKB-UniRule"/>
</dbReference>
<dbReference type="CDD" id="cd13957">
    <property type="entry name" value="PT_UbiA_Cox10"/>
    <property type="match status" value="1"/>
</dbReference>
<dbReference type="Gene3D" id="1.10.357.140">
    <property type="entry name" value="UbiA prenyltransferase"/>
    <property type="match status" value="1"/>
</dbReference>
<dbReference type="HAMAP" id="MF_00154">
    <property type="entry name" value="CyoE_CtaB"/>
    <property type="match status" value="1"/>
</dbReference>
<dbReference type="InterPro" id="IPR006369">
    <property type="entry name" value="Protohaem_IX_farnesylTrfase"/>
</dbReference>
<dbReference type="InterPro" id="IPR000537">
    <property type="entry name" value="UbiA_prenyltransferase"/>
</dbReference>
<dbReference type="InterPro" id="IPR030470">
    <property type="entry name" value="UbiA_prenylTrfase_CS"/>
</dbReference>
<dbReference type="InterPro" id="IPR044878">
    <property type="entry name" value="UbiA_sf"/>
</dbReference>
<dbReference type="NCBIfam" id="TIGR01473">
    <property type="entry name" value="cyoE_ctaB"/>
    <property type="match status" value="1"/>
</dbReference>
<dbReference type="NCBIfam" id="NF003349">
    <property type="entry name" value="PRK04375.1-2"/>
    <property type="match status" value="1"/>
</dbReference>
<dbReference type="PANTHER" id="PTHR43448:SF7">
    <property type="entry name" value="4-HYDROXYBENZOATE SOLANESYLTRANSFERASE"/>
    <property type="match status" value="1"/>
</dbReference>
<dbReference type="PANTHER" id="PTHR43448">
    <property type="entry name" value="PROTOHEME IX FARNESYLTRANSFERASE, MITOCHONDRIAL"/>
    <property type="match status" value="1"/>
</dbReference>
<dbReference type="Pfam" id="PF01040">
    <property type="entry name" value="UbiA"/>
    <property type="match status" value="1"/>
</dbReference>
<dbReference type="PROSITE" id="PS00943">
    <property type="entry name" value="UBIA"/>
    <property type="match status" value="1"/>
</dbReference>
<reference key="1">
    <citation type="journal article" date="2007" name="PLoS Genet.">
        <title>Patterns and implications of gene gain and loss in the evolution of Prochlorococcus.</title>
        <authorList>
            <person name="Kettler G.C."/>
            <person name="Martiny A.C."/>
            <person name="Huang K."/>
            <person name="Zucker J."/>
            <person name="Coleman M.L."/>
            <person name="Rodrigue S."/>
            <person name="Chen F."/>
            <person name="Lapidus A."/>
            <person name="Ferriera S."/>
            <person name="Johnson J."/>
            <person name="Steglich C."/>
            <person name="Church G.M."/>
            <person name="Richardson P."/>
            <person name="Chisholm S.W."/>
        </authorList>
    </citation>
    <scope>NUCLEOTIDE SEQUENCE [LARGE SCALE GENOMIC DNA]</scope>
    <source>
        <strain>NATL2A</strain>
    </source>
</reference>
<sequence>MVSSTSELITQPVNREEVVPSRKRIKLPAWLEVVKPRLIPLLLATTVGGMALSEEWPLPSPRLACTLGGGALAAAAAGALNCLWEQDLDKRMKRTSNRALPSGRLSQSSVFIGAVACTLVSSALLVSGVNCLAAGLTLLGLCSYVLLYTAFLKPRTSQNIVFGGVAGAIPPLVGASAAAGHIGLGGWWLFSLVMVWTPAHFWALAILLKEDYRSVGIPMLPTVSGPFVTAKAISVYGYLTVFLSFLGCFVLPEGGLLYGILLLPYNSRLLQLVSRLRDNPEDLDRAKGLFRWSILYMFGVCFLLVISRLQVSIVFNDQLIALIKDFSTGFS</sequence>